<reference key="1">
    <citation type="journal article" date="2000" name="Nucleic Acids Res.">
        <title>Genome sequences of Chlamydia trachomatis MoPn and Chlamydia pneumoniae AR39.</title>
        <authorList>
            <person name="Read T.D."/>
            <person name="Brunham R.C."/>
            <person name="Shen C."/>
            <person name="Gill S.R."/>
            <person name="Heidelberg J.F."/>
            <person name="White O."/>
            <person name="Hickey E.K."/>
            <person name="Peterson J.D."/>
            <person name="Utterback T.R."/>
            <person name="Berry K.J."/>
            <person name="Bass S."/>
            <person name="Linher K.D."/>
            <person name="Weidman J.F."/>
            <person name="Khouri H.M."/>
            <person name="Craven B."/>
            <person name="Bowman C."/>
            <person name="Dodson R.J."/>
            <person name="Gwinn M.L."/>
            <person name="Nelson W.C."/>
            <person name="DeBoy R.T."/>
            <person name="Kolonay J.F."/>
            <person name="McClarty G."/>
            <person name="Salzberg S.L."/>
            <person name="Eisen J.A."/>
            <person name="Fraser C.M."/>
        </authorList>
    </citation>
    <scope>NUCLEOTIDE SEQUENCE [LARGE SCALE GENOMIC DNA]</scope>
    <source>
        <strain>MoPn / Nigg</strain>
    </source>
</reference>
<organism>
    <name type="scientific">Chlamydia muridarum (strain MoPn / Nigg)</name>
    <dbReference type="NCBI Taxonomy" id="243161"/>
    <lineage>
        <taxon>Bacteria</taxon>
        <taxon>Pseudomonadati</taxon>
        <taxon>Chlamydiota</taxon>
        <taxon>Chlamydiia</taxon>
        <taxon>Chlamydiales</taxon>
        <taxon>Chlamydiaceae</taxon>
        <taxon>Chlamydia/Chlamydophila group</taxon>
        <taxon>Chlamydia</taxon>
    </lineage>
</organism>
<feature type="chain" id="PRO_0000158752" description="Adenylate kinase">
    <location>
        <begin position="1"/>
        <end position="253"/>
    </location>
</feature>
<feature type="region of interest" description="NMP" evidence="1">
    <location>
        <begin position="35"/>
        <end position="64"/>
    </location>
</feature>
<feature type="region of interest" description="LID" evidence="1">
    <location>
        <begin position="143"/>
        <end position="176"/>
    </location>
</feature>
<feature type="binding site" evidence="1">
    <location>
        <begin position="15"/>
        <end position="20"/>
    </location>
    <ligand>
        <name>ATP</name>
        <dbReference type="ChEBI" id="CHEBI:30616"/>
    </ligand>
</feature>
<feature type="binding site" evidence="1">
    <location>
        <position position="36"/>
    </location>
    <ligand>
        <name>AMP</name>
        <dbReference type="ChEBI" id="CHEBI:456215"/>
    </ligand>
</feature>
<feature type="binding site" evidence="1">
    <location>
        <position position="41"/>
    </location>
    <ligand>
        <name>AMP</name>
        <dbReference type="ChEBI" id="CHEBI:456215"/>
    </ligand>
</feature>
<feature type="binding site" evidence="1">
    <location>
        <begin position="62"/>
        <end position="64"/>
    </location>
    <ligand>
        <name>AMP</name>
        <dbReference type="ChEBI" id="CHEBI:456215"/>
    </ligand>
</feature>
<feature type="binding site" evidence="1">
    <location>
        <begin position="103"/>
        <end position="106"/>
    </location>
    <ligand>
        <name>AMP</name>
        <dbReference type="ChEBI" id="CHEBI:456215"/>
    </ligand>
</feature>
<feature type="binding site" evidence="1">
    <location>
        <position position="110"/>
    </location>
    <ligand>
        <name>AMP</name>
        <dbReference type="ChEBI" id="CHEBI:456215"/>
    </ligand>
</feature>
<feature type="binding site" evidence="1">
    <location>
        <position position="144"/>
    </location>
    <ligand>
        <name>ATP</name>
        <dbReference type="ChEBI" id="CHEBI:30616"/>
    </ligand>
</feature>
<feature type="binding site" evidence="1">
    <location>
        <position position="147"/>
    </location>
    <ligand>
        <name>Zn(2+)</name>
        <dbReference type="ChEBI" id="CHEBI:29105"/>
        <note>structural</note>
    </ligand>
</feature>
<feature type="binding site" evidence="1">
    <location>
        <position position="150"/>
    </location>
    <ligand>
        <name>Zn(2+)</name>
        <dbReference type="ChEBI" id="CHEBI:29105"/>
        <note>structural</note>
    </ligand>
</feature>
<feature type="binding site" evidence="1">
    <location>
        <begin position="153"/>
        <end position="154"/>
    </location>
    <ligand>
        <name>ATP</name>
        <dbReference type="ChEBI" id="CHEBI:30616"/>
    </ligand>
</feature>
<feature type="binding site" evidence="1">
    <location>
        <position position="163"/>
    </location>
    <ligand>
        <name>Zn(2+)</name>
        <dbReference type="ChEBI" id="CHEBI:29105"/>
        <note>structural</note>
    </ligand>
</feature>
<feature type="binding site" evidence="1">
    <location>
        <position position="166"/>
    </location>
    <ligand>
        <name>Zn(2+)</name>
        <dbReference type="ChEBI" id="CHEBI:29105"/>
        <note>structural</note>
    </ligand>
</feature>
<feature type="binding site" evidence="1">
    <location>
        <position position="173"/>
    </location>
    <ligand>
        <name>AMP</name>
        <dbReference type="ChEBI" id="CHEBI:456215"/>
    </ligand>
</feature>
<feature type="binding site" evidence="1">
    <location>
        <position position="184"/>
    </location>
    <ligand>
        <name>AMP</name>
        <dbReference type="ChEBI" id="CHEBI:456215"/>
    </ligand>
</feature>
<feature type="binding site" evidence="1">
    <location>
        <position position="212"/>
    </location>
    <ligand>
        <name>ATP</name>
        <dbReference type="ChEBI" id="CHEBI:30616"/>
    </ligand>
</feature>
<evidence type="ECO:0000255" key="1">
    <source>
        <dbReference type="HAMAP-Rule" id="MF_00235"/>
    </source>
</evidence>
<sequence length="253" mass="28598">MDRSPLFLIIMGAPGSGKGTQSKLLASQLSLQHISSGDLLRNAVSQNTPLGQEIKSYLDQGKLLPDQLVWKLVHEKLDELQQDTLLRKLSFLSRSENGAILDGFPRTVAQAKLLNEFLCSYFPDYKIILLDISDEEVLNRLTSRYICPSCQGIYNKQQGFSRCPKCLVELTRRSDDTPEVILDRIQTYKQETQPVLDYYAALQRLITIDANAPTQQVFKNILDALPESNYTIHKKSCCDCCDCDCYDGCDCEE</sequence>
<gene>
    <name evidence="1" type="primary">adk</name>
    <name type="ordered locus">TC_0404</name>
</gene>
<comment type="function">
    <text evidence="1">Catalyzes the reversible transfer of the terminal phosphate group between ATP and AMP. Plays an important role in cellular energy homeostasis and in adenine nucleotide metabolism.</text>
</comment>
<comment type="catalytic activity">
    <reaction evidence="1">
        <text>AMP + ATP = 2 ADP</text>
        <dbReference type="Rhea" id="RHEA:12973"/>
        <dbReference type="ChEBI" id="CHEBI:30616"/>
        <dbReference type="ChEBI" id="CHEBI:456215"/>
        <dbReference type="ChEBI" id="CHEBI:456216"/>
        <dbReference type="EC" id="2.7.4.3"/>
    </reaction>
</comment>
<comment type="pathway">
    <text evidence="1">Purine metabolism; AMP biosynthesis via salvage pathway; AMP from ADP: step 1/1.</text>
</comment>
<comment type="subunit">
    <text evidence="1">Monomer.</text>
</comment>
<comment type="subcellular location">
    <subcellularLocation>
        <location evidence="1">Cytoplasm</location>
    </subcellularLocation>
</comment>
<comment type="domain">
    <text evidence="1">Consists of three domains, a large central CORE domain and two small peripheral domains, NMPbind and LID, which undergo movements during catalysis. The LID domain closes over the site of phosphoryl transfer upon ATP binding. Assembling and dissambling the active center during each catalytic cycle provides an effective means to prevent ATP hydrolysis. Some bacteria have evolved a zinc-coordinating structure that stabilizes the LID domain.</text>
</comment>
<comment type="similarity">
    <text evidence="1">Belongs to the adenylate kinase family.</text>
</comment>
<accession>Q9PKR0</accession>
<name>KAD_CHLMU</name>
<protein>
    <recommendedName>
        <fullName evidence="1">Adenylate kinase</fullName>
        <shortName evidence="1">AK</shortName>
        <ecNumber evidence="1">2.7.4.3</ecNumber>
    </recommendedName>
    <alternativeName>
        <fullName evidence="1">ATP-AMP transphosphorylase</fullName>
    </alternativeName>
    <alternativeName>
        <fullName evidence="1">ATP:AMP phosphotransferase</fullName>
    </alternativeName>
    <alternativeName>
        <fullName evidence="1">Adenylate monophosphate kinase</fullName>
    </alternativeName>
</protein>
<dbReference type="EC" id="2.7.4.3" evidence="1"/>
<dbReference type="EMBL" id="AE002160">
    <property type="protein sequence ID" value="AAF39261.1"/>
    <property type="molecule type" value="Genomic_DNA"/>
</dbReference>
<dbReference type="PIR" id="B81706">
    <property type="entry name" value="B81706"/>
</dbReference>
<dbReference type="RefSeq" id="WP_010230383.1">
    <property type="nucleotide sequence ID" value="NZ_CP063055.1"/>
</dbReference>
<dbReference type="SMR" id="Q9PKR0"/>
<dbReference type="GeneID" id="1245756"/>
<dbReference type="KEGG" id="cmu:TC_0404"/>
<dbReference type="eggNOG" id="COG0563">
    <property type="taxonomic scope" value="Bacteria"/>
</dbReference>
<dbReference type="HOGENOM" id="CLU_032354_1_2_0"/>
<dbReference type="OrthoDB" id="9805030at2"/>
<dbReference type="UniPathway" id="UPA00588">
    <property type="reaction ID" value="UER00649"/>
</dbReference>
<dbReference type="Proteomes" id="UP000000800">
    <property type="component" value="Chromosome"/>
</dbReference>
<dbReference type="GO" id="GO:0005737">
    <property type="term" value="C:cytoplasm"/>
    <property type="evidence" value="ECO:0007669"/>
    <property type="project" value="UniProtKB-SubCell"/>
</dbReference>
<dbReference type="GO" id="GO:0004017">
    <property type="term" value="F:adenylate kinase activity"/>
    <property type="evidence" value="ECO:0007669"/>
    <property type="project" value="UniProtKB-UniRule"/>
</dbReference>
<dbReference type="GO" id="GO:0005524">
    <property type="term" value="F:ATP binding"/>
    <property type="evidence" value="ECO:0007669"/>
    <property type="project" value="UniProtKB-UniRule"/>
</dbReference>
<dbReference type="GO" id="GO:0046872">
    <property type="term" value="F:metal ion binding"/>
    <property type="evidence" value="ECO:0007669"/>
    <property type="project" value="UniProtKB-KW"/>
</dbReference>
<dbReference type="GO" id="GO:0044209">
    <property type="term" value="P:AMP salvage"/>
    <property type="evidence" value="ECO:0007669"/>
    <property type="project" value="UniProtKB-UniRule"/>
</dbReference>
<dbReference type="CDD" id="cd01428">
    <property type="entry name" value="ADK"/>
    <property type="match status" value="1"/>
</dbReference>
<dbReference type="Gene3D" id="3.40.50.300">
    <property type="entry name" value="P-loop containing nucleotide triphosphate hydrolases"/>
    <property type="match status" value="1"/>
</dbReference>
<dbReference type="HAMAP" id="MF_00235">
    <property type="entry name" value="Adenylate_kinase_Adk"/>
    <property type="match status" value="1"/>
</dbReference>
<dbReference type="InterPro" id="IPR006259">
    <property type="entry name" value="Adenyl_kin_sub"/>
</dbReference>
<dbReference type="InterPro" id="IPR000850">
    <property type="entry name" value="Adenylat/UMP-CMP_kin"/>
</dbReference>
<dbReference type="InterPro" id="IPR033690">
    <property type="entry name" value="Adenylat_kinase_CS"/>
</dbReference>
<dbReference type="InterPro" id="IPR027417">
    <property type="entry name" value="P-loop_NTPase"/>
</dbReference>
<dbReference type="NCBIfam" id="TIGR01351">
    <property type="entry name" value="adk"/>
    <property type="match status" value="1"/>
</dbReference>
<dbReference type="NCBIfam" id="NF001385">
    <property type="entry name" value="PRK00279.2-3"/>
    <property type="match status" value="1"/>
</dbReference>
<dbReference type="PANTHER" id="PTHR23359">
    <property type="entry name" value="NUCLEOTIDE KINASE"/>
    <property type="match status" value="1"/>
</dbReference>
<dbReference type="Pfam" id="PF00406">
    <property type="entry name" value="ADK"/>
    <property type="match status" value="1"/>
</dbReference>
<dbReference type="PRINTS" id="PR00094">
    <property type="entry name" value="ADENYLTKNASE"/>
</dbReference>
<dbReference type="SUPFAM" id="SSF52540">
    <property type="entry name" value="P-loop containing nucleoside triphosphate hydrolases"/>
    <property type="match status" value="1"/>
</dbReference>
<dbReference type="PROSITE" id="PS00113">
    <property type="entry name" value="ADENYLATE_KINASE"/>
    <property type="match status" value="1"/>
</dbReference>
<proteinExistence type="inferred from homology"/>
<keyword id="KW-0067">ATP-binding</keyword>
<keyword id="KW-0963">Cytoplasm</keyword>
<keyword id="KW-0418">Kinase</keyword>
<keyword id="KW-0479">Metal-binding</keyword>
<keyword id="KW-0545">Nucleotide biosynthesis</keyword>
<keyword id="KW-0547">Nucleotide-binding</keyword>
<keyword id="KW-0808">Transferase</keyword>
<keyword id="KW-0862">Zinc</keyword>